<feature type="chain" id="PRO_1000146881" description="Co-chaperonin GroES">
    <location>
        <begin position="1"/>
        <end position="98"/>
    </location>
</feature>
<dbReference type="EMBL" id="CP000634">
    <property type="protein sequence ID" value="ACM38885.1"/>
    <property type="molecule type" value="Genomic_DNA"/>
</dbReference>
<dbReference type="RefSeq" id="WP_012654127.1">
    <property type="nucleotide sequence ID" value="NC_011988.1"/>
</dbReference>
<dbReference type="SMR" id="B9K1Y7"/>
<dbReference type="STRING" id="311402.Avi_5829"/>
<dbReference type="KEGG" id="avi:Avi_5829"/>
<dbReference type="eggNOG" id="COG0234">
    <property type="taxonomic scope" value="Bacteria"/>
</dbReference>
<dbReference type="HOGENOM" id="CLU_132825_1_0_5"/>
<dbReference type="Proteomes" id="UP000001596">
    <property type="component" value="Chromosome 2"/>
</dbReference>
<dbReference type="GO" id="GO:0005737">
    <property type="term" value="C:cytoplasm"/>
    <property type="evidence" value="ECO:0007669"/>
    <property type="project" value="UniProtKB-SubCell"/>
</dbReference>
<dbReference type="GO" id="GO:0005524">
    <property type="term" value="F:ATP binding"/>
    <property type="evidence" value="ECO:0007669"/>
    <property type="project" value="InterPro"/>
</dbReference>
<dbReference type="GO" id="GO:0046872">
    <property type="term" value="F:metal ion binding"/>
    <property type="evidence" value="ECO:0007669"/>
    <property type="project" value="TreeGrafter"/>
</dbReference>
<dbReference type="GO" id="GO:0044183">
    <property type="term" value="F:protein folding chaperone"/>
    <property type="evidence" value="ECO:0007669"/>
    <property type="project" value="InterPro"/>
</dbReference>
<dbReference type="GO" id="GO:0051087">
    <property type="term" value="F:protein-folding chaperone binding"/>
    <property type="evidence" value="ECO:0007669"/>
    <property type="project" value="TreeGrafter"/>
</dbReference>
<dbReference type="GO" id="GO:0051082">
    <property type="term" value="F:unfolded protein binding"/>
    <property type="evidence" value="ECO:0007669"/>
    <property type="project" value="TreeGrafter"/>
</dbReference>
<dbReference type="GO" id="GO:0051085">
    <property type="term" value="P:chaperone cofactor-dependent protein refolding"/>
    <property type="evidence" value="ECO:0007669"/>
    <property type="project" value="TreeGrafter"/>
</dbReference>
<dbReference type="CDD" id="cd00320">
    <property type="entry name" value="cpn10"/>
    <property type="match status" value="1"/>
</dbReference>
<dbReference type="FunFam" id="2.30.33.40:FF:000001">
    <property type="entry name" value="10 kDa chaperonin"/>
    <property type="match status" value="1"/>
</dbReference>
<dbReference type="Gene3D" id="2.30.33.40">
    <property type="entry name" value="GroES chaperonin"/>
    <property type="match status" value="1"/>
</dbReference>
<dbReference type="HAMAP" id="MF_00580">
    <property type="entry name" value="CH10"/>
    <property type="match status" value="1"/>
</dbReference>
<dbReference type="InterPro" id="IPR020818">
    <property type="entry name" value="Chaperonin_GroES"/>
</dbReference>
<dbReference type="InterPro" id="IPR037124">
    <property type="entry name" value="Chaperonin_GroES_sf"/>
</dbReference>
<dbReference type="InterPro" id="IPR018369">
    <property type="entry name" value="Chaprnonin_Cpn10_CS"/>
</dbReference>
<dbReference type="InterPro" id="IPR011032">
    <property type="entry name" value="GroES-like_sf"/>
</dbReference>
<dbReference type="NCBIfam" id="NF001527">
    <property type="entry name" value="PRK00364.1-2"/>
    <property type="match status" value="1"/>
</dbReference>
<dbReference type="NCBIfam" id="NF001529">
    <property type="entry name" value="PRK00364.1-5"/>
    <property type="match status" value="1"/>
</dbReference>
<dbReference type="NCBIfam" id="NF001531">
    <property type="entry name" value="PRK00364.2-2"/>
    <property type="match status" value="1"/>
</dbReference>
<dbReference type="NCBIfam" id="NF001533">
    <property type="entry name" value="PRK00364.2-4"/>
    <property type="match status" value="1"/>
</dbReference>
<dbReference type="NCBIfam" id="NF001534">
    <property type="entry name" value="PRK00364.2-5"/>
    <property type="match status" value="1"/>
</dbReference>
<dbReference type="PANTHER" id="PTHR10772">
    <property type="entry name" value="10 KDA HEAT SHOCK PROTEIN"/>
    <property type="match status" value="1"/>
</dbReference>
<dbReference type="PANTHER" id="PTHR10772:SF58">
    <property type="entry name" value="CO-CHAPERONIN GROES"/>
    <property type="match status" value="1"/>
</dbReference>
<dbReference type="Pfam" id="PF00166">
    <property type="entry name" value="Cpn10"/>
    <property type="match status" value="1"/>
</dbReference>
<dbReference type="PRINTS" id="PR00297">
    <property type="entry name" value="CHAPERONIN10"/>
</dbReference>
<dbReference type="SMART" id="SM00883">
    <property type="entry name" value="Cpn10"/>
    <property type="match status" value="1"/>
</dbReference>
<dbReference type="SUPFAM" id="SSF50129">
    <property type="entry name" value="GroES-like"/>
    <property type="match status" value="1"/>
</dbReference>
<dbReference type="PROSITE" id="PS00681">
    <property type="entry name" value="CHAPERONINS_CPN10"/>
    <property type="match status" value="1"/>
</dbReference>
<protein>
    <recommendedName>
        <fullName evidence="1">Co-chaperonin GroES</fullName>
    </recommendedName>
    <alternativeName>
        <fullName evidence="1">10 kDa chaperonin</fullName>
    </alternativeName>
    <alternativeName>
        <fullName evidence="1">Chaperonin-10</fullName>
        <shortName evidence="1">Cpn10</shortName>
    </alternativeName>
</protein>
<reference key="1">
    <citation type="journal article" date="2009" name="J. Bacteriol.">
        <title>Genome sequences of three Agrobacterium biovars help elucidate the evolution of multichromosome genomes in bacteria.</title>
        <authorList>
            <person name="Slater S.C."/>
            <person name="Goldman B.S."/>
            <person name="Goodner B."/>
            <person name="Setubal J.C."/>
            <person name="Farrand S.K."/>
            <person name="Nester E.W."/>
            <person name="Burr T.J."/>
            <person name="Banta L."/>
            <person name="Dickerman A.W."/>
            <person name="Paulsen I."/>
            <person name="Otten L."/>
            <person name="Suen G."/>
            <person name="Welch R."/>
            <person name="Almeida N.F."/>
            <person name="Arnold F."/>
            <person name="Burton O.T."/>
            <person name="Du Z."/>
            <person name="Ewing A."/>
            <person name="Godsy E."/>
            <person name="Heisel S."/>
            <person name="Houmiel K.L."/>
            <person name="Jhaveri J."/>
            <person name="Lu J."/>
            <person name="Miller N.M."/>
            <person name="Norton S."/>
            <person name="Chen Q."/>
            <person name="Phoolcharoen W."/>
            <person name="Ohlin V."/>
            <person name="Ondrusek D."/>
            <person name="Pride N."/>
            <person name="Stricklin S.L."/>
            <person name="Sun J."/>
            <person name="Wheeler C."/>
            <person name="Wilson L."/>
            <person name="Zhu H."/>
            <person name="Wood D.W."/>
        </authorList>
    </citation>
    <scope>NUCLEOTIDE SEQUENCE [LARGE SCALE GENOMIC DNA]</scope>
    <source>
        <strain>ATCC BAA-846 / DSM 112012 / S4</strain>
    </source>
</reference>
<evidence type="ECO:0000255" key="1">
    <source>
        <dbReference type="HAMAP-Rule" id="MF_00580"/>
    </source>
</evidence>
<accession>B9K1Y7</accession>
<proteinExistence type="inferred from homology"/>
<keyword id="KW-0143">Chaperone</keyword>
<keyword id="KW-0963">Cytoplasm</keyword>
<keyword id="KW-1185">Reference proteome</keyword>
<sequence length="98" mass="10499">MASTNFRPLHDRVVVKRVESEEKTKGGIIIPDTAKEKPAEGEIIAVGPGTRDDKGALVALDVKVGDRVLFGKWSGTEVKLDGVDLLIMKEADIMGVIG</sequence>
<comment type="function">
    <text evidence="1">Together with the chaperonin GroEL, plays an essential role in assisting protein folding. The GroEL-GroES system forms a nano-cage that allows encapsulation of the non-native substrate proteins and provides a physical environment optimized to promote and accelerate protein folding. GroES binds to the apical surface of the GroEL ring, thereby capping the opening of the GroEL channel.</text>
</comment>
<comment type="subunit">
    <text evidence="1">Heptamer of 7 subunits arranged in a ring. Interacts with the chaperonin GroEL.</text>
</comment>
<comment type="subcellular location">
    <subcellularLocation>
        <location evidence="1">Cytoplasm</location>
    </subcellularLocation>
</comment>
<comment type="similarity">
    <text evidence="1">Belongs to the GroES chaperonin family.</text>
</comment>
<gene>
    <name evidence="1" type="primary">groES</name>
    <name evidence="1" type="synonym">groS</name>
    <name type="ordered locus">Avi_5829</name>
</gene>
<name>CH10_ALLAM</name>
<organism>
    <name type="scientific">Allorhizobium ampelinum (strain ATCC BAA-846 / DSM 112012 / S4)</name>
    <name type="common">Agrobacterium vitis (strain S4)</name>
    <dbReference type="NCBI Taxonomy" id="311402"/>
    <lineage>
        <taxon>Bacteria</taxon>
        <taxon>Pseudomonadati</taxon>
        <taxon>Pseudomonadota</taxon>
        <taxon>Alphaproteobacteria</taxon>
        <taxon>Hyphomicrobiales</taxon>
        <taxon>Rhizobiaceae</taxon>
        <taxon>Rhizobium/Agrobacterium group</taxon>
        <taxon>Allorhizobium</taxon>
        <taxon>Allorhizobium ampelinum</taxon>
    </lineage>
</organism>